<organism>
    <name type="scientific">Haloferax mediterranei</name>
    <name type="common">Halobacterium mediterranei</name>
    <dbReference type="NCBI Taxonomy" id="2252"/>
    <lineage>
        <taxon>Archaea</taxon>
        <taxon>Methanobacteriati</taxon>
        <taxon>Methanobacteriota</taxon>
        <taxon>Stenosarchaea group</taxon>
        <taxon>Halobacteria</taxon>
        <taxon>Halobacteriales</taxon>
        <taxon>Haloferacaceae</taxon>
        <taxon>Haloferax</taxon>
    </lineage>
</organism>
<reference key="1">
    <citation type="journal article" date="1992" name="Biochem. J.">
        <title>A serine proteinase of an archaebacterium, Halobacterium mediterranei. A homologue of eubacterial subtilisins.</title>
        <authorList>
            <person name="Stepanov V.M."/>
            <person name="Rudenskaya G.N."/>
            <person name="Revina L.P."/>
            <person name="Gryaznova Y.B."/>
            <person name="Lysogorskaya E.N."/>
            <person name="Filippova I.Y."/>
            <person name="Ivanova I.I."/>
        </authorList>
    </citation>
    <scope>PROTEIN SEQUENCE</scope>
    <source>
        <strain>1538</strain>
    </source>
</reference>
<keyword id="KW-0903">Direct protein sequencing</keyword>
<keyword id="KW-0378">Hydrolase</keyword>
<keyword id="KW-0645">Protease</keyword>
<keyword id="KW-0964">Secreted</keyword>
<keyword id="KW-0720">Serine protease</keyword>
<accession>P28308</accession>
<proteinExistence type="evidence at protein level"/>
<name>PRTE_HALME</name>
<comment type="subcellular location">
    <subcellularLocation>
        <location>Secreted</location>
    </subcellularLocation>
</comment>
<comment type="similarity">
    <text evidence="5">Belongs to the peptidase S8 family.</text>
</comment>
<dbReference type="EC" id="3.4.21.-"/>
<dbReference type="PIR" id="S23967">
    <property type="entry name" value="S23967"/>
</dbReference>
<dbReference type="MEROPS" id="S08.101"/>
<dbReference type="GO" id="GO:0005576">
    <property type="term" value="C:extracellular region"/>
    <property type="evidence" value="ECO:0007669"/>
    <property type="project" value="UniProtKB-SubCell"/>
</dbReference>
<dbReference type="GO" id="GO:0008236">
    <property type="term" value="F:serine-type peptidase activity"/>
    <property type="evidence" value="ECO:0007669"/>
    <property type="project" value="UniProtKB-KW"/>
</dbReference>
<dbReference type="GO" id="GO:0006508">
    <property type="term" value="P:proteolysis"/>
    <property type="evidence" value="ECO:0007669"/>
    <property type="project" value="UniProtKB-KW"/>
</dbReference>
<feature type="chain" id="PRO_0000076414" description="Secreted proteinase">
    <location>
        <begin position="1"/>
        <end position="32" status="greater than"/>
    </location>
</feature>
<feature type="region of interest" description="Disordered" evidence="4">
    <location>
        <begin position="1"/>
        <end position="32"/>
    </location>
</feature>
<feature type="active site" description="Charge relay system" evidence="1 2 3">
    <location>
        <position position="22"/>
    </location>
</feature>
<feature type="non-consecutive residues" evidence="5">
    <location>
        <begin position="20"/>
        <end position="21"/>
    </location>
</feature>
<feature type="non-terminal residue">
    <location>
        <position position="32"/>
    </location>
</feature>
<protein>
    <recommendedName>
        <fullName>Secreted proteinase</fullName>
        <ecNumber>3.4.21.-</ecNumber>
    </recommendedName>
</protein>
<sequence length="32" mass="3491">DTANDPKYGSQYAPQKVNADVDQGVXXXHPEL</sequence>
<evidence type="ECO:0000255" key="1">
    <source>
        <dbReference type="PROSITE-ProRule" id="PRU10080"/>
    </source>
</evidence>
<evidence type="ECO:0000255" key="2">
    <source>
        <dbReference type="PROSITE-ProRule" id="PRU10081"/>
    </source>
</evidence>
<evidence type="ECO:0000255" key="3">
    <source>
        <dbReference type="PROSITE-ProRule" id="PRU10082"/>
    </source>
</evidence>
<evidence type="ECO:0000256" key="4">
    <source>
        <dbReference type="SAM" id="MobiDB-lite"/>
    </source>
</evidence>
<evidence type="ECO:0000305" key="5"/>